<proteinExistence type="evidence at protein level"/>
<name>BDH_THABB</name>
<organism>
    <name type="scientific">Thauera butanivorans (strain ATCC 43655 / DSM 2080 / JCM 20651 / CCUG 51053 / NBRC 103042 / IAM 12574 / Bu B1211)</name>
    <name type="common">Pseudomonas butanovora</name>
    <dbReference type="NCBI Taxonomy" id="1219356"/>
    <lineage>
        <taxon>Bacteria</taxon>
        <taxon>Pseudomonadati</taxon>
        <taxon>Pseudomonadota</taxon>
        <taxon>Betaproteobacteria</taxon>
        <taxon>Rhodocyclales</taxon>
        <taxon>Zoogloeaceae</taxon>
        <taxon>Thauera</taxon>
    </lineage>
</organism>
<evidence type="ECO:0000250" key="1">
    <source>
        <dbReference type="UniProtKB" id="Q46444"/>
    </source>
</evidence>
<evidence type="ECO:0000255" key="2">
    <source>
        <dbReference type="PROSITE-ProRule" id="PRU00433"/>
    </source>
</evidence>
<evidence type="ECO:0000269" key="3">
    <source>
    </source>
</evidence>
<evidence type="ECO:0000269" key="4">
    <source>
    </source>
</evidence>
<evidence type="ECO:0000269" key="5">
    <source>
    </source>
</evidence>
<evidence type="ECO:0000303" key="6">
    <source>
    </source>
</evidence>
<evidence type="ECO:0000303" key="7">
    <source>
    </source>
</evidence>
<evidence type="ECO:0000305" key="8"/>
<evidence type="ECO:0000305" key="9">
    <source>
    </source>
</evidence>
<keyword id="KW-0106">Calcium</keyword>
<keyword id="KW-0903">Direct protein sequencing</keyword>
<keyword id="KW-1015">Disulfide bond</keyword>
<keyword id="KW-0349">Heme</keyword>
<keyword id="KW-0408">Iron</keyword>
<keyword id="KW-0479">Metal-binding</keyword>
<keyword id="KW-0560">Oxidoreductase</keyword>
<keyword id="KW-0574">Periplasm</keyword>
<keyword id="KW-0634">PQQ</keyword>
<keyword id="KW-0732">Signal</keyword>
<reference key="1">
    <citation type="journal article" date="2002" name="J. Bacteriol.">
        <title>Two distinct alcohol dehydrogenases participate in butane metabolism by Pseudomonas butanovora.</title>
        <authorList>
            <person name="Vangnai A.S."/>
            <person name="Arp D.J."/>
            <person name="Sayavedra-Soto L.A."/>
        </authorList>
    </citation>
    <scope>NUCLEOTIDE SEQUENCE [GENOMIC DNA]</scope>
    <scope>FUNCTION</scope>
    <scope>DISRUPTION PHENOTYPE</scope>
    <scope>COFACTOR</scope>
    <scope>INDUCTION</scope>
    <scope>SUBCELLULAR LOCATION</scope>
    <source>
        <strain>ATCC 43655 / DSM 2080 / JCM 20651 / CCUG 51053 / NBRC 103042 / IAM 12574 / Bu B1211</strain>
    </source>
</reference>
<reference key="2">
    <citation type="journal article" date="2001" name="Microbiology">
        <title>An inducible 1-butanol dehydrogenase, a quinohaemoprotein, is involved in the oxidation of butane by Pseudomonas butanovora.</title>
        <authorList>
            <person name="Vangnai A.S."/>
            <person name="Arp D.J."/>
        </authorList>
    </citation>
    <scope>PROTEIN SEQUENCE OF 39-53</scope>
    <scope>FUNCTION</scope>
    <scope>CATALYTIC ACTIVITY</scope>
    <scope>BIOPHYSICOCHEMICAL PROPERTIES</scope>
    <scope>COFACTOR</scope>
    <scope>ACTIVITY REGULATION</scope>
    <scope>SUBUNIT</scope>
    <scope>SUBSTRATE SPECIFICITY</scope>
    <source>
        <strain>ATCC 43655 / DSM 2080 / JCM 20651 / CCUG 51053 / NBRC 103042 / IAM 12574 / Bu B1211</strain>
    </source>
</reference>
<reference key="3">
    <citation type="journal article" date="2002" name="J. Bacteriol.">
        <title>Roles for the two 1-butanol dehydrogenases of Pseudomonas butanovora in butane and 1-butanol metabolism.</title>
        <authorList>
            <person name="Vangnai A.S."/>
            <person name="Sayavedra-Soto L.A."/>
            <person name="Arp D.J."/>
        </authorList>
    </citation>
    <scope>FUNCTION</scope>
    <scope>DISRUPTION PHENOTYPE</scope>
    <scope>INDUCTION</scope>
    <source>
        <strain>ATCC 43655 / DSM 2080 / JCM 20651 / CCUG 51053 / NBRC 103042 / IAM 12574 / Bu B1211</strain>
    </source>
</reference>
<protein>
    <recommendedName>
        <fullName evidence="6">1-butanol dehydrogenase (cytochrome c)</fullName>
        <shortName evidence="6">BDH</shortName>
        <ecNumber evidence="3">1.1.2.9</ecNumber>
    </recommendedName>
    <alternativeName>
        <fullName evidence="6">NAD-independent 1-butanol dehydrogenase</fullName>
    </alternativeName>
    <alternativeName>
        <fullName evidence="7">PQQ-containing alcohol dehydrogenase</fullName>
    </alternativeName>
    <alternativeName>
        <fullName evidence="7">Quinohemoprotein</fullName>
    </alternativeName>
</protein>
<accession>Q9AF95</accession>
<sequence>MLTTTFARKREESVPLRKGIQRALLGLSCLVLSTTSFAAGGEWRTHGYDDAGTRYSPLAQITPDNAKELGLVWSYDLESSRGVEATPIVVDGVMYVTAPWSVVHALDVRSGKRLWTYDPEVPREKGKNACCDVVNRGVAVHEGKVFVGSLDGRLVAIDARTGKRVWERNTLIDDDKPYTITGAPRVIKGKVVIGNGGAEFGVRGYITAYDPTAASRPGVVPGPGDPSLPFEDASMEAAAKTWDPAGQVLGSGRRRHGVELDGLYRKAGFCCTSAPATPSPWSHRKRSPAGGDNLYTASIVALRPDTGEYVWHYQQTPADNWDYTSTQDLILADIELGGKPRKVILHAPKNGFFFVIDRTDGKFISAQNFVPVNWATGYDENGRPIENPEGAWPGHLSMRFPAPSARTNWHSMSYSPQTGLAYFPAQNIPLVLQEDKNWSYNQAQPGQAMAGIGWNLGMLVNPRPPASQPFGRLIAWDPVQQKEVWRKEHVSPWNGGTLVTAGNVVFQGTADARLLAFDARDGKELWSAPMGTGVIAAPVTYEVDGKQYVSIAVGWGGVYGNFTRASERRTPGTVYTFALGGKAEMPAFTEYQLNNLVSGVDYNPDDVAEGTGLYVTNCVFCHGVPGVDKGGGIPNLGYSTAETIAHLDQFVFKGPFMPRGMPDFTGKLTPEQVEKIKAFILGTADAVRPKK</sequence>
<gene>
    <name evidence="7" type="primary">bdh</name>
</gene>
<comment type="function">
    <text evidence="3 4 5">Involved in the metabolism of butane (PubMed:11889098). Could be important in the detoxification of 1-butanol (PubMed:12142403). Catalyzes the oxidation of 1-butanol to butyraldehyde (PubMed:11238982, PubMed:12142403). Also able to use 1-propanol, 2-pentanol, propionaldehyde and butyraldehyde as substrates (PubMed:11238982).</text>
</comment>
<comment type="catalytic activity">
    <reaction evidence="3">
        <text>butan-1-ol + 2 Fe(III)-[cytochrome c] = butanal + 2 Fe(II)-[cytochrome c] + 2 H(+)</text>
        <dbReference type="Rhea" id="RHEA:43432"/>
        <dbReference type="Rhea" id="RHEA-COMP:10350"/>
        <dbReference type="Rhea" id="RHEA-COMP:14399"/>
        <dbReference type="ChEBI" id="CHEBI:15378"/>
        <dbReference type="ChEBI" id="CHEBI:15743"/>
        <dbReference type="ChEBI" id="CHEBI:28885"/>
        <dbReference type="ChEBI" id="CHEBI:29033"/>
        <dbReference type="ChEBI" id="CHEBI:29034"/>
        <dbReference type="EC" id="1.1.2.9"/>
    </reaction>
</comment>
<comment type="cofactor">
    <cofactor evidence="3 9">
        <name>pyrroloquinoline quinone</name>
        <dbReference type="ChEBI" id="CHEBI:58442"/>
    </cofactor>
    <text evidence="3">Binds 1 PQQ group per subunit.</text>
</comment>
<comment type="cofactor">
    <cofactor evidence="3 9">
        <name>Ca(2+)</name>
        <dbReference type="ChEBI" id="CHEBI:29108"/>
    </cofactor>
    <text evidence="1">Binds 1 Ca(2+) ion per subunit.</text>
</comment>
<comment type="cofactor">
    <cofactor evidence="3">
        <name>heme c</name>
        <dbReference type="ChEBI" id="CHEBI:61717"/>
    </cofactor>
    <text evidence="3">Binds 1 heme c group per subunit.</text>
</comment>
<comment type="activity regulation">
    <text evidence="3">Dehydrogenase activity is increased by ammonium ions.</text>
</comment>
<comment type="biophysicochemical properties">
    <kinetics>
        <KM evidence="3">7 uM for 1-butanol</KM>
        <KM evidence="3">535 uM for butyraldehyde</KM>
    </kinetics>
    <phDependence>
        <text evidence="3">Optimum pH is 8.</text>
    </phDependence>
    <temperatureDependence>
        <text evidence="3">Optimum temperature is 60 degrees Celsius.</text>
    </temperatureDependence>
</comment>
<comment type="subunit">
    <text evidence="3">Monomer.</text>
</comment>
<comment type="subcellular location">
    <subcellularLocation>
        <location evidence="9">Periplasm</location>
    </subcellularLocation>
</comment>
<comment type="induction">
    <text evidence="3 4 5">By butane and 1-butanol.</text>
</comment>
<comment type="disruption phenotype">
    <text evidence="4 5">Cells lacking this gene show a delayed growth on butane and are unable to tolerate high level of 1-butanol (PubMed:11889098, PubMed:12142403). When both bdh and boh genes are inactivated, growth on butane and 1-butanol is eliminated (PubMed:11889098).</text>
</comment>
<comment type="similarity">
    <text evidence="8">Belongs to the bacterial PQQ dehydrogenase family.</text>
</comment>
<dbReference type="EC" id="1.1.2.9" evidence="3"/>
<dbReference type="EMBL" id="AF355798">
    <property type="protein sequence ID" value="AAK27220.2"/>
    <property type="molecule type" value="Genomic_DNA"/>
</dbReference>
<dbReference type="SMR" id="Q9AF95"/>
<dbReference type="KEGG" id="ag:AAK27220"/>
<dbReference type="BioCyc" id="MetaCyc:MONOMER-19863"/>
<dbReference type="BRENDA" id="1.1.2.9">
    <property type="organism ID" value="8965"/>
</dbReference>
<dbReference type="GO" id="GO:0016020">
    <property type="term" value="C:membrane"/>
    <property type="evidence" value="ECO:0007669"/>
    <property type="project" value="InterPro"/>
</dbReference>
<dbReference type="GO" id="GO:0042597">
    <property type="term" value="C:periplasmic space"/>
    <property type="evidence" value="ECO:0007669"/>
    <property type="project" value="UniProtKB-SubCell"/>
</dbReference>
<dbReference type="GO" id="GO:0005509">
    <property type="term" value="F:calcium ion binding"/>
    <property type="evidence" value="ECO:0007669"/>
    <property type="project" value="InterPro"/>
</dbReference>
<dbReference type="GO" id="GO:0009055">
    <property type="term" value="F:electron transfer activity"/>
    <property type="evidence" value="ECO:0007669"/>
    <property type="project" value="InterPro"/>
</dbReference>
<dbReference type="GO" id="GO:0020037">
    <property type="term" value="F:heme binding"/>
    <property type="evidence" value="ECO:0007669"/>
    <property type="project" value="InterPro"/>
</dbReference>
<dbReference type="GO" id="GO:0016614">
    <property type="term" value="F:oxidoreductase activity, acting on CH-OH group of donors"/>
    <property type="evidence" value="ECO:0007669"/>
    <property type="project" value="InterPro"/>
</dbReference>
<dbReference type="CDD" id="cd10279">
    <property type="entry name" value="PQQ_ADH_II"/>
    <property type="match status" value="1"/>
</dbReference>
<dbReference type="Gene3D" id="1.10.760.10">
    <property type="entry name" value="Cytochrome c-like domain"/>
    <property type="match status" value="1"/>
</dbReference>
<dbReference type="Gene3D" id="2.140.10.10">
    <property type="entry name" value="Quinoprotein alcohol dehydrogenase-like superfamily"/>
    <property type="match status" value="1"/>
</dbReference>
<dbReference type="InterPro" id="IPR009056">
    <property type="entry name" value="Cyt_c-like_dom"/>
</dbReference>
<dbReference type="InterPro" id="IPR036909">
    <property type="entry name" value="Cyt_c-like_dom_sf"/>
</dbReference>
<dbReference type="InterPro" id="IPR018391">
    <property type="entry name" value="PQQ_b-propeller_rpt"/>
</dbReference>
<dbReference type="InterPro" id="IPR017512">
    <property type="entry name" value="PQQ_MeOH/EtOH_DH"/>
</dbReference>
<dbReference type="InterPro" id="IPR002372">
    <property type="entry name" value="PQQ_rpt_dom"/>
</dbReference>
<dbReference type="InterPro" id="IPR011047">
    <property type="entry name" value="Quinoprotein_ADH-like_sf"/>
</dbReference>
<dbReference type="NCBIfam" id="TIGR03075">
    <property type="entry name" value="PQQ_enz_alc_DH"/>
    <property type="match status" value="1"/>
</dbReference>
<dbReference type="PANTHER" id="PTHR32303">
    <property type="entry name" value="QUINOPROTEIN ALCOHOL DEHYDROGENASE (CYTOCHROME C)"/>
    <property type="match status" value="1"/>
</dbReference>
<dbReference type="Pfam" id="PF13442">
    <property type="entry name" value="Cytochrome_CBB3"/>
    <property type="match status" value="1"/>
</dbReference>
<dbReference type="Pfam" id="PF01011">
    <property type="entry name" value="PQQ"/>
    <property type="match status" value="3"/>
</dbReference>
<dbReference type="SMART" id="SM00564">
    <property type="entry name" value="PQQ"/>
    <property type="match status" value="3"/>
</dbReference>
<dbReference type="SUPFAM" id="SSF46626">
    <property type="entry name" value="Cytochrome c"/>
    <property type="match status" value="1"/>
</dbReference>
<dbReference type="SUPFAM" id="SSF50998">
    <property type="entry name" value="Quinoprotein alcohol dehydrogenase-like"/>
    <property type="match status" value="1"/>
</dbReference>
<dbReference type="PROSITE" id="PS51007">
    <property type="entry name" value="CYTC"/>
    <property type="match status" value="1"/>
</dbReference>
<feature type="signal peptide" evidence="3 9">
    <location>
        <begin position="1"/>
        <end position="38"/>
    </location>
</feature>
<feature type="chain" id="PRO_0000442915" description="1-butanol dehydrogenase (cytochrome c)">
    <location>
        <begin position="39"/>
        <end position="691"/>
    </location>
</feature>
<feature type="domain" description="Cytochrome c" evidence="2">
    <location>
        <begin position="605"/>
        <end position="684"/>
    </location>
</feature>
<feature type="active site" description="Proton acceptor" evidence="1">
    <location>
        <position position="322"/>
    </location>
</feature>
<feature type="binding site" evidence="1">
    <location>
        <position position="84"/>
    </location>
    <ligand>
        <name>pyrroloquinoline quinone</name>
        <dbReference type="ChEBI" id="CHEBI:58442"/>
    </ligand>
</feature>
<feature type="binding site" evidence="1">
    <location>
        <position position="136"/>
    </location>
    <ligand>
        <name>pyrroloquinoline quinone</name>
        <dbReference type="ChEBI" id="CHEBI:58442"/>
    </ligand>
</feature>
<feature type="binding site" evidence="1">
    <location>
        <position position="181"/>
    </location>
    <ligand>
        <name>pyrroloquinoline quinone</name>
        <dbReference type="ChEBI" id="CHEBI:58442"/>
    </ligand>
</feature>
<feature type="binding site" evidence="1">
    <location>
        <begin position="197"/>
        <end position="198"/>
    </location>
    <ligand>
        <name>pyrroloquinoline quinone</name>
        <dbReference type="ChEBI" id="CHEBI:58442"/>
    </ligand>
</feature>
<feature type="binding site" evidence="1">
    <location>
        <position position="199"/>
    </location>
    <ligand>
        <name>Ca(2+)</name>
        <dbReference type="ChEBI" id="CHEBI:29108"/>
    </ligand>
</feature>
<feature type="binding site" evidence="1">
    <location>
        <position position="322"/>
    </location>
    <ligand>
        <name>Ca(2+)</name>
        <dbReference type="ChEBI" id="CHEBI:29108"/>
    </ligand>
</feature>
<feature type="binding site" evidence="1">
    <location>
        <position position="349"/>
    </location>
    <ligand>
        <name>pyrroloquinoline quinone</name>
        <dbReference type="ChEBI" id="CHEBI:58442"/>
    </ligand>
</feature>
<feature type="binding site" evidence="1">
    <location>
        <begin position="408"/>
        <end position="409"/>
    </location>
    <ligand>
        <name>pyrroloquinoline quinone</name>
        <dbReference type="ChEBI" id="CHEBI:58442"/>
    </ligand>
</feature>
<feature type="binding site" evidence="1">
    <location>
        <position position="558"/>
    </location>
    <ligand>
        <name>pyrroloquinoline quinone</name>
        <dbReference type="ChEBI" id="CHEBI:58442"/>
    </ligand>
</feature>
<feature type="binding site" description="covalent" evidence="1">
    <location>
        <position position="618"/>
    </location>
    <ligand>
        <name>heme c</name>
        <dbReference type="ChEBI" id="CHEBI:61717"/>
    </ligand>
</feature>
<feature type="binding site" description="covalent" evidence="1">
    <location>
        <position position="621"/>
    </location>
    <ligand>
        <name>heme c</name>
        <dbReference type="ChEBI" id="CHEBI:61717"/>
    </ligand>
</feature>
<feature type="binding site" description="axial binding residue" evidence="1">
    <location>
        <position position="622"/>
    </location>
    <ligand>
        <name>heme c</name>
        <dbReference type="ChEBI" id="CHEBI:61717"/>
    </ligand>
    <ligandPart>
        <name>Fe</name>
        <dbReference type="ChEBI" id="CHEBI:18248"/>
    </ligandPart>
</feature>
<feature type="binding site" description="axial binding residue" evidence="1">
    <location>
        <position position="661"/>
    </location>
    <ligand>
        <name>heme c</name>
        <dbReference type="ChEBI" id="CHEBI:61717"/>
    </ligand>
    <ligandPart>
        <name>Fe</name>
        <dbReference type="ChEBI" id="CHEBI:18248"/>
    </ligandPart>
</feature>
<feature type="disulfide bond" evidence="1">
    <location>
        <begin position="130"/>
        <end position="131"/>
    </location>
</feature>